<protein>
    <recommendedName>
        <fullName evidence="7">GATA transcription factor 18</fullName>
    </recommendedName>
    <alternativeName>
        <fullName evidence="8">Protein HANABA TARANU</fullName>
    </alternativeName>
</protein>
<dbReference type="EMBL" id="AB493644">
    <property type="protein sequence ID" value="BAH30482.1"/>
    <property type="molecule type" value="mRNA"/>
</dbReference>
<dbReference type="EMBL" id="AL049862">
    <property type="protein sequence ID" value="CAB42916.1"/>
    <property type="status" value="ALT_INIT"/>
    <property type="molecule type" value="Genomic_DNA"/>
</dbReference>
<dbReference type="EMBL" id="CP002686">
    <property type="protein sequence ID" value="AEE78720.1"/>
    <property type="molecule type" value="Genomic_DNA"/>
</dbReference>
<dbReference type="EMBL" id="AY086746">
    <property type="protein sequence ID" value="AAM63797.1"/>
    <property type="status" value="ALT_INIT"/>
    <property type="molecule type" value="mRNA"/>
</dbReference>
<dbReference type="PIR" id="T08408">
    <property type="entry name" value="T08408"/>
</dbReference>
<dbReference type="PDB" id="8J48">
    <property type="method" value="X-ray"/>
    <property type="resolution" value="1.94 A"/>
    <property type="chains" value="A/D=146-197"/>
</dbReference>
<dbReference type="PDBsum" id="8J48"/>
<dbReference type="SMR" id="Q8LC79"/>
<dbReference type="BioGRID" id="9569">
    <property type="interactions" value="11"/>
</dbReference>
<dbReference type="FunCoup" id="Q8LC79">
    <property type="interactions" value="126"/>
</dbReference>
<dbReference type="IntAct" id="Q8LC79">
    <property type="interactions" value="9"/>
</dbReference>
<dbReference type="STRING" id="3702.Q8LC79"/>
<dbReference type="PaxDb" id="3702-AT3G50870.1"/>
<dbReference type="ProteomicsDB" id="248607"/>
<dbReference type="EnsemblPlants" id="AT3G50870.1">
    <property type="protein sequence ID" value="AT3G50870.1"/>
    <property type="gene ID" value="AT3G50870"/>
</dbReference>
<dbReference type="GeneID" id="824251"/>
<dbReference type="Gramene" id="AT3G50870.1">
    <property type="protein sequence ID" value="AT3G50870.1"/>
    <property type="gene ID" value="AT3G50870"/>
</dbReference>
<dbReference type="KEGG" id="ath:AT3G50870"/>
<dbReference type="Araport" id="AT3G50870"/>
<dbReference type="TAIR" id="AT3G50870">
    <property type="gene designation" value="MNP"/>
</dbReference>
<dbReference type="eggNOG" id="KOG1601">
    <property type="taxonomic scope" value="Eukaryota"/>
</dbReference>
<dbReference type="HOGENOM" id="CLU_062129_1_0_1"/>
<dbReference type="InParanoid" id="Q8LC79"/>
<dbReference type="OMA" id="GSYSMVF"/>
<dbReference type="PhylomeDB" id="Q8LC79"/>
<dbReference type="PRO" id="PR:Q8LC79"/>
<dbReference type="Proteomes" id="UP000006548">
    <property type="component" value="Chromosome 3"/>
</dbReference>
<dbReference type="ExpressionAtlas" id="Q8LC79">
    <property type="expression patterns" value="baseline and differential"/>
</dbReference>
<dbReference type="GO" id="GO:0005634">
    <property type="term" value="C:nucleus"/>
    <property type="evidence" value="ECO:0000314"/>
    <property type="project" value="UniProtKB"/>
</dbReference>
<dbReference type="GO" id="GO:0001228">
    <property type="term" value="F:DNA-binding transcription activator activity, RNA polymerase II-specific"/>
    <property type="evidence" value="ECO:0000314"/>
    <property type="project" value="UniProtKB"/>
</dbReference>
<dbReference type="GO" id="GO:0003700">
    <property type="term" value="F:DNA-binding transcription factor activity"/>
    <property type="evidence" value="ECO:0000314"/>
    <property type="project" value="UniProtKB"/>
</dbReference>
<dbReference type="GO" id="GO:0042803">
    <property type="term" value="F:protein homodimerization activity"/>
    <property type="evidence" value="ECO:0000314"/>
    <property type="project" value="UniProtKB"/>
</dbReference>
<dbReference type="GO" id="GO:0043565">
    <property type="term" value="F:sequence-specific DNA binding"/>
    <property type="evidence" value="ECO:0000314"/>
    <property type="project" value="UniProtKB"/>
</dbReference>
<dbReference type="GO" id="GO:0008270">
    <property type="term" value="F:zinc ion binding"/>
    <property type="evidence" value="ECO:0007669"/>
    <property type="project" value="UniProtKB-KW"/>
</dbReference>
<dbReference type="GO" id="GO:0048825">
    <property type="term" value="P:cotyledon development"/>
    <property type="evidence" value="ECO:0000315"/>
    <property type="project" value="UniProtKB"/>
</dbReference>
<dbReference type="GO" id="GO:0009793">
    <property type="term" value="P:embryo development ending in seed dormancy"/>
    <property type="evidence" value="ECO:0000315"/>
    <property type="project" value="TAIR"/>
</dbReference>
<dbReference type="GO" id="GO:0009908">
    <property type="term" value="P:flower development"/>
    <property type="evidence" value="ECO:0000315"/>
    <property type="project" value="UniProtKB"/>
</dbReference>
<dbReference type="GO" id="GO:0045892">
    <property type="term" value="P:negative regulation of DNA-templated transcription"/>
    <property type="evidence" value="ECO:0000314"/>
    <property type="project" value="UniProtKB"/>
</dbReference>
<dbReference type="GO" id="GO:0006355">
    <property type="term" value="P:regulation of DNA-templated transcription"/>
    <property type="evidence" value="ECO:0000270"/>
    <property type="project" value="TAIR"/>
</dbReference>
<dbReference type="GO" id="GO:0009909">
    <property type="term" value="P:regulation of flower development"/>
    <property type="evidence" value="ECO:0000315"/>
    <property type="project" value="UniProtKB"/>
</dbReference>
<dbReference type="GO" id="GO:0009934">
    <property type="term" value="P:regulation of meristem structural organization"/>
    <property type="evidence" value="ECO:0000315"/>
    <property type="project" value="UniProtKB"/>
</dbReference>
<dbReference type="CDD" id="cd00202">
    <property type="entry name" value="ZnF_GATA"/>
    <property type="match status" value="1"/>
</dbReference>
<dbReference type="FunFam" id="3.30.50.10:FF:000053">
    <property type="entry name" value="GATA transcription factor 15"/>
    <property type="match status" value="1"/>
</dbReference>
<dbReference type="Gene3D" id="3.30.50.10">
    <property type="entry name" value="Erythroid Transcription Factor GATA-1, subunit A"/>
    <property type="match status" value="1"/>
</dbReference>
<dbReference type="InterPro" id="IPR000679">
    <property type="entry name" value="Znf_GATA"/>
</dbReference>
<dbReference type="InterPro" id="IPR013088">
    <property type="entry name" value="Znf_NHR/GATA"/>
</dbReference>
<dbReference type="PANTHER" id="PTHR46813">
    <property type="entry name" value="GATA TRANSCRIPTION FACTOR 18"/>
    <property type="match status" value="1"/>
</dbReference>
<dbReference type="PANTHER" id="PTHR46813:SF16">
    <property type="entry name" value="GATA TRANSCRIPTION FACTOR 18"/>
    <property type="match status" value="1"/>
</dbReference>
<dbReference type="Pfam" id="PF00320">
    <property type="entry name" value="GATA"/>
    <property type="match status" value="1"/>
</dbReference>
<dbReference type="SMART" id="SM00401">
    <property type="entry name" value="ZnF_GATA"/>
    <property type="match status" value="1"/>
</dbReference>
<dbReference type="SUPFAM" id="SSF57716">
    <property type="entry name" value="Glucocorticoid receptor-like (DNA-binding domain)"/>
    <property type="match status" value="1"/>
</dbReference>
<dbReference type="PROSITE" id="PS00344">
    <property type="entry name" value="GATA_ZN_FINGER_1"/>
    <property type="match status" value="1"/>
</dbReference>
<dbReference type="PROSITE" id="PS50114">
    <property type="entry name" value="GATA_ZN_FINGER_2"/>
    <property type="match status" value="1"/>
</dbReference>
<reference key="1">
    <citation type="submission" date="2009-03" db="EMBL/GenBank/DDBJ databases">
        <title>ORF cloning and analysis of Arabidopsis transcription factor genes.</title>
        <authorList>
            <person name="Fujita M."/>
        </authorList>
    </citation>
    <scope>NUCLEOTIDE SEQUENCE [MRNA]</scope>
</reference>
<reference key="2">
    <citation type="journal article" date="2000" name="Nature">
        <title>Sequence and analysis of chromosome 3 of the plant Arabidopsis thaliana.</title>
        <authorList>
            <person name="Salanoubat M."/>
            <person name="Lemcke K."/>
            <person name="Rieger M."/>
            <person name="Ansorge W."/>
            <person name="Unseld M."/>
            <person name="Fartmann B."/>
            <person name="Valle G."/>
            <person name="Bloecker H."/>
            <person name="Perez-Alonso M."/>
            <person name="Obermaier B."/>
            <person name="Delseny M."/>
            <person name="Boutry M."/>
            <person name="Grivell L.A."/>
            <person name="Mache R."/>
            <person name="Puigdomenech P."/>
            <person name="De Simone V."/>
            <person name="Choisne N."/>
            <person name="Artiguenave F."/>
            <person name="Robert C."/>
            <person name="Brottier P."/>
            <person name="Wincker P."/>
            <person name="Cattolico L."/>
            <person name="Weissenbach J."/>
            <person name="Saurin W."/>
            <person name="Quetier F."/>
            <person name="Schaefer M."/>
            <person name="Mueller-Auer S."/>
            <person name="Gabel C."/>
            <person name="Fuchs M."/>
            <person name="Benes V."/>
            <person name="Wurmbach E."/>
            <person name="Drzonek H."/>
            <person name="Erfle H."/>
            <person name="Jordan N."/>
            <person name="Bangert S."/>
            <person name="Wiedelmann R."/>
            <person name="Kranz H."/>
            <person name="Voss H."/>
            <person name="Holland R."/>
            <person name="Brandt P."/>
            <person name="Nyakatura G."/>
            <person name="Vezzi A."/>
            <person name="D'Angelo M."/>
            <person name="Pallavicini A."/>
            <person name="Toppo S."/>
            <person name="Simionati B."/>
            <person name="Conrad A."/>
            <person name="Hornischer K."/>
            <person name="Kauer G."/>
            <person name="Loehnert T.-H."/>
            <person name="Nordsiek G."/>
            <person name="Reichelt J."/>
            <person name="Scharfe M."/>
            <person name="Schoen O."/>
            <person name="Bargues M."/>
            <person name="Terol J."/>
            <person name="Climent J."/>
            <person name="Navarro P."/>
            <person name="Collado C."/>
            <person name="Perez-Perez A."/>
            <person name="Ottenwaelder B."/>
            <person name="Duchemin D."/>
            <person name="Cooke R."/>
            <person name="Laudie M."/>
            <person name="Berger-Llauro C."/>
            <person name="Purnelle B."/>
            <person name="Masuy D."/>
            <person name="de Haan M."/>
            <person name="Maarse A.C."/>
            <person name="Alcaraz J.-P."/>
            <person name="Cottet A."/>
            <person name="Casacuberta E."/>
            <person name="Monfort A."/>
            <person name="Argiriou A."/>
            <person name="Flores M."/>
            <person name="Liguori R."/>
            <person name="Vitale D."/>
            <person name="Mannhaupt G."/>
            <person name="Haase D."/>
            <person name="Schoof H."/>
            <person name="Rudd S."/>
            <person name="Zaccaria P."/>
            <person name="Mewes H.-W."/>
            <person name="Mayer K.F.X."/>
            <person name="Kaul S."/>
            <person name="Town C.D."/>
            <person name="Koo H.L."/>
            <person name="Tallon L.J."/>
            <person name="Jenkins J."/>
            <person name="Rooney T."/>
            <person name="Rizzo M."/>
            <person name="Walts A."/>
            <person name="Utterback T."/>
            <person name="Fujii C.Y."/>
            <person name="Shea T.P."/>
            <person name="Creasy T.H."/>
            <person name="Haas B."/>
            <person name="Maiti R."/>
            <person name="Wu D."/>
            <person name="Peterson J."/>
            <person name="Van Aken S."/>
            <person name="Pai G."/>
            <person name="Militscher J."/>
            <person name="Sellers P."/>
            <person name="Gill J.E."/>
            <person name="Feldblyum T.V."/>
            <person name="Preuss D."/>
            <person name="Lin X."/>
            <person name="Nierman W.C."/>
            <person name="Salzberg S.L."/>
            <person name="White O."/>
            <person name="Venter J.C."/>
            <person name="Fraser C.M."/>
            <person name="Kaneko T."/>
            <person name="Nakamura Y."/>
            <person name="Sato S."/>
            <person name="Kato T."/>
            <person name="Asamizu E."/>
            <person name="Sasamoto S."/>
            <person name="Kimura T."/>
            <person name="Idesawa K."/>
            <person name="Kawashima K."/>
            <person name="Kishida Y."/>
            <person name="Kiyokawa C."/>
            <person name="Kohara M."/>
            <person name="Matsumoto M."/>
            <person name="Matsuno A."/>
            <person name="Muraki A."/>
            <person name="Nakayama S."/>
            <person name="Nakazaki N."/>
            <person name="Shinpo S."/>
            <person name="Takeuchi C."/>
            <person name="Wada T."/>
            <person name="Watanabe A."/>
            <person name="Yamada M."/>
            <person name="Yasuda M."/>
            <person name="Tabata S."/>
        </authorList>
    </citation>
    <scope>NUCLEOTIDE SEQUENCE [LARGE SCALE GENOMIC DNA]</scope>
    <source>
        <strain>cv. Columbia</strain>
    </source>
</reference>
<reference key="3">
    <citation type="journal article" date="2017" name="Plant J.">
        <title>Araport11: a complete reannotation of the Arabidopsis thaliana reference genome.</title>
        <authorList>
            <person name="Cheng C.Y."/>
            <person name="Krishnakumar V."/>
            <person name="Chan A.P."/>
            <person name="Thibaud-Nissen F."/>
            <person name="Schobel S."/>
            <person name="Town C.D."/>
        </authorList>
    </citation>
    <scope>GENOME REANNOTATION</scope>
    <source>
        <strain>cv. Columbia</strain>
    </source>
</reference>
<reference key="4">
    <citation type="submission" date="2002-03" db="EMBL/GenBank/DDBJ databases">
        <title>Full-length cDNA from Arabidopsis thaliana.</title>
        <authorList>
            <person name="Brover V.V."/>
            <person name="Troukhan M.E."/>
            <person name="Alexandrov N.A."/>
            <person name="Lu Y.-P."/>
            <person name="Flavell R.B."/>
            <person name="Feldmann K.A."/>
        </authorList>
    </citation>
    <scope>NUCLEOTIDE SEQUENCE [LARGE SCALE MRNA]</scope>
</reference>
<reference key="5">
    <citation type="journal article" date="2004" name="Plant Cell">
        <title>HANABA TARANU is a GATA transcription factor that regulates shoot apical meristem and flower development in Arabidopsis.</title>
        <authorList>
            <person name="Zhao Y."/>
            <person name="Medrano L."/>
            <person name="Ohashi K."/>
            <person name="Fletcher J.C."/>
            <person name="Yu H."/>
            <person name="Sakai H."/>
            <person name="Meyerowitz E.M."/>
        </authorList>
    </citation>
    <scope>FUNCTION</scope>
    <scope>DISRUPTION PHENOTYPE</scope>
    <scope>MUTAGENESIS OF GLY-180</scope>
    <scope>TISSUE SPECIFICITY</scope>
    <scope>GENE FAMILY</scope>
    <scope>NOMENCLATURE</scope>
    <source>
        <strain>cv. Columbia</strain>
        <strain>cv. Landsberg erecta</strain>
        <strain>cv. Wassilewskija</strain>
    </source>
</reference>
<reference key="6">
    <citation type="journal article" date="2004" name="Plant Physiol.">
        <title>The GATA family of transcription factors in Arabidopsis and rice.</title>
        <authorList>
            <person name="Reyes J.C."/>
            <person name="Muro-Pastor M.I."/>
            <person name="Florencio F.J."/>
        </authorList>
    </citation>
    <scope>GENE FAMILY ORGANIZATION</scope>
</reference>
<reference key="7">
    <citation type="journal article" date="2010" name="Dev. Cell">
        <title>The GATA factor HANABA TARANU is required to position the proembryo boundary in the early Arabidopsis embryo.</title>
        <authorList>
            <person name="Nawy T."/>
            <person name="Bayer M."/>
            <person name="Mravec J."/>
            <person name="Friml J."/>
            <person name="Birnbaum K.D."/>
            <person name="Lukowitz W."/>
        </authorList>
    </citation>
    <scope>FUNCTION</scope>
    <scope>DISRUPTION PHENOTYPE</scope>
    <scope>MUTAGENESIS OF GLY-180</scope>
    <scope>SUBCELLULAR LOCATION</scope>
    <scope>DEVELOPMENTAL STAGE</scope>
    <source>
        <strain>cv. Landsberg erecta</strain>
    </source>
</reference>
<reference key="8">
    <citation type="journal article" date="2012" name="Development">
        <title>Stable establishment of cotyledon identity during embryogenesis in Arabidopsis by ANGUSTIFOLIA3 and HANABA TARANU.</title>
        <authorList>
            <person name="Kanei M."/>
            <person name="Horiguchi G."/>
            <person name="Tsukaya H."/>
        </authorList>
    </citation>
    <scope>FUNCTION</scope>
    <scope>DISRUPTION PHENOTYPE</scope>
    <source>
        <strain>cv. Columbia</strain>
        <strain>cv. Wassilewskija</strain>
    </source>
</reference>
<reference key="9">
    <citation type="journal article" date="2013" name="Plant Cell">
        <title>Transcription repressor HANABA TARANU controls flower development by integrating the actions of multiple hormones, floral organ specification genes, and GATA3 family genes in Arabidopsis.</title>
        <authorList>
            <person name="Zhang X."/>
            <person name="Zhou Y."/>
            <person name="Ding L."/>
            <person name="Wu Z."/>
            <person name="Liu R."/>
            <person name="Meyerowitz E.M."/>
        </authorList>
    </citation>
    <scope>FUNCTION</scope>
    <scope>DISRUPTION PHENOTYPE</scope>
    <scope>REPRESSION BY HAN</scope>
    <scope>SUBUNIT</scope>
    <scope>INTERACTION WITH GATA22; GATA21 AND GATA19</scope>
</reference>
<reference key="10">
    <citation type="journal article" date="2015" name="PLoS Genet.">
        <title>HANABA TARANU (HAN) bridges meristem and organ primordia boundaries through PINHEAD, JAGGED, BLADE-ON-PETIOLE2 and CYTOKININ OXIDASE 3 during flower development in Arabidopsis.</title>
        <authorList>
            <person name="Ding L."/>
            <person name="Yan S."/>
            <person name="Jiang L."/>
            <person name="Zhao W."/>
            <person name="Ning K."/>
            <person name="Zhao J."/>
            <person name="Liu X."/>
            <person name="Zhang J."/>
            <person name="Wang Q."/>
            <person name="Zhang X."/>
        </authorList>
    </citation>
    <scope>FUNCTION</scope>
    <scope>DISRUPTION PHENOTYPE</scope>
    <scope>INTERACTION WITH JAG AND AGO10/PNH</scope>
    <scope>TISSUE SPECIFICITY</scope>
</reference>
<comment type="function">
    <text evidence="2 3 4 5 6">Transcriptional factor that specifically binds 5'-GATA-3' or 5'-GAT-3' motifs within gene promoters (including its own promoter and GATA21 promoter), thus regulating the expression of genes mostly involved in hormone responses and floral organ specification (including genes regulating hormones responses) (PubMed:23335616, PubMed:26390296). Regulates both flower and shoot apical meristem (SAM) development, especially for establishing organ boundaries in shoots and flowers, probably by controlling the number and position of WUS-expressing cells (PubMed:15367721, PubMed:23335616). Coregulates, with AGO10/PNH, the shoot apical meristem (SAM) organization. Regulates floral organ development via the promotion of JAG and NPR5/BOP2 expression. Modulates cytokinin homeostasis in organ boundaries by regulating CKX3 expression (PubMed:26390296). Involved in cell proliferation and differentiation (PubMed:15367721). Required to position the inductive proembryo boundary via the regulation of gene expression and for early embryonic development (PubMed:20643354). Together with GIF1/AN3, mediates cotyledon identity by preventing ectopic root formation through the repression of PLT1 expression (PubMed:22669825).</text>
</comment>
<comment type="subunit">
    <text evidence="5 6">Homodimer (PubMed:23335616, PubMed:26390296). Forms heterodimers with GATA19, GATA22 and GATA21 (PubMed:23335616). Interacts with JAG. Binds to AGO10/PNH (PubMed:26390296).</text>
</comment>
<comment type="subcellular location">
    <subcellularLocation>
        <location evidence="3">Nucleus</location>
    </subcellularLocation>
</comment>
<comment type="tissue specificity">
    <text evidence="2 6">Expressed in vegetative and inflorescence shoot apical meristems (SAMs), axillary (SAMs), floral meristems, developing ovules and stamens, vascular tissues, and in the embryo.</text>
</comment>
<comment type="developmental stage">
    <text evidence="2 3">In the developing axillary shoot apical meristem (SAM), expressed at the boundary between nascent axillary meristems and the adaxial side of leaves. In all mature SAMs, located at the boundaries between the central SAM and the initiating organ primordia, as well as between the neighboring initiating organ primordia. In the floral meristem, strongly expressed at the boundaries between the meristematic dome and the initiating floral organ primordia, and also at the boundaries between the primordia of different whorls. Expression at the boundaries attenuates as the organ primordia grow apart. In flowers, localized at the boundary between the central meristematic cells and differentiating stamen primordia to later accumulates at the medial ridge region of the carpel. Highly expressed in the developing anthers, in both the tapetum cell layer and microsporocytes. In developing ovules, confined to inner and outer integuments. In aerial tissues, strongly present in phloem tissues (PubMed:15367721). First observed in the whole embryo, but later confined to the center cells of the embryo and provascular tissues (PubMed:15367721, PubMed:20643354).</text>
</comment>
<comment type="induction">
    <text evidence="5">Repressed via a negative regulatory feedback loop.</text>
</comment>
<comment type="disruption phenotype">
    <text evidence="2 3 4 5 6">Abnormal flower and shoot apical meristem (SAM) development with fused sepals and reduced organ numbers in all four whorls as well as flatter and smaller meristems (PubMed:15367721, PubMed:23335616). Reduced levels of gibberellins (GA) but increased content of trans-zeatin riboside (ZR) and auxin (IAA) (PubMed:26390296). Coordinated apical shift of gene expression patterns in the basal proembryo, including auxin transporter genes and resulting in apical redistribution of auxin (PubMed:20643354). Altered WUS expression from early embryogenesis (e.g. globular stage) (PubMed:15367721). The double mutant an3 han-30 exhibits severe defects in cotyledon development such as ectopic roots formation at the apical region of the embryo and associated with an abnormal expansion of PLT1 expression from the basal embryonic region to the apical region (PubMed:22669825). The double mutant pnh-2 han-2 has smaller inflorescence meristems (IM) and taller floral meristems (FM) leading to fewer petals. The double mutant han-2 jag-3 exhibits reduced petal numbers, more serrated sepals and narrower petals (PubMed:26390296).</text>
</comment>
<comment type="miscellaneous">
    <text evidence="8">'Hanaba taranu' means 'fewer floral leaves' in Japanese.</text>
</comment>
<comment type="similarity">
    <text evidence="9">Belongs to the type IV zinc-finger family. Class B subfamily.</text>
</comment>
<comment type="sequence caution" evidence="9">
    <conflict type="erroneous initiation">
        <sequence resource="EMBL-CDS" id="AAM63797"/>
    </conflict>
    <text>Truncated N-terminus.</text>
</comment>
<comment type="sequence caution" evidence="9">
    <conflict type="erroneous initiation">
        <sequence resource="EMBL-CDS" id="CAB42916"/>
    </conflict>
    <text>Truncated N-terminus.</text>
</comment>
<name>GAT18_ARATH</name>
<keyword id="KW-0002">3D-structure</keyword>
<keyword id="KW-0217">Developmental protein</keyword>
<keyword id="KW-0238">DNA-binding</keyword>
<keyword id="KW-0479">Metal-binding</keyword>
<keyword id="KW-0539">Nucleus</keyword>
<keyword id="KW-1185">Reference proteome</keyword>
<keyword id="KW-0804">Transcription</keyword>
<keyword id="KW-0805">Transcription regulation</keyword>
<keyword id="KW-0862">Zinc</keyword>
<keyword id="KW-0863">Zinc-finger</keyword>
<sequence length="295" mass="31832">MMQTPYTTSTQGQYCHSCGMFHHHSQSCCYNNNNNSNAGSYSMVFSMQNGGVFEQNGEDYHHSSSLVDCTLSLGTPSTRLCEEDEKRRRSTSSGASSCISNFWDLIHTKNNNSKTAPYNNVPSFSANKPSRGCSGGGGGGGGGGGGDSLLARRCANCDTTSTPLWRNGPRGPKSLCNACGIRFKKEERRTTAATGNTVVGAAPVQTDQYGHHNSGYNNYHAATNNNNNNGTPWAHHHSTQRVPCNYPANEIRFMDDYGSGVANNVESDGAHGGVPFLSWRLNVADRASLVHDFTR</sequence>
<accession>Q8LC79</accession>
<accession>C0SVE1</accession>
<accession>Q9SVL2</accession>
<gene>
    <name evidence="7" type="primary">GATA18</name>
    <name evidence="8" type="synonym">HAN</name>
    <name evidence="10" type="ordered locus">At3g50870</name>
    <name evidence="11" type="ORF">F18B3.150</name>
</gene>
<feature type="chain" id="PRO_0000083448" description="GATA transcription factor 18">
    <location>
        <begin position="1"/>
        <end position="295"/>
    </location>
</feature>
<feature type="zinc finger region" description="GATA-type" evidence="1">
    <location>
        <begin position="148"/>
        <end position="202"/>
    </location>
</feature>
<feature type="mutagenesis site" description="In han-21; reduced fertility. Coordinated apical shift of gene expression patterns in the basal proembryo." evidence="3">
    <original>G</original>
    <variation>D</variation>
    <location>
        <position position="180"/>
    </location>
</feature>
<feature type="mutagenesis site" description="In han-2; reduced fertility. Abnormal flower and shoot apical meristem (SAM) development with fused sepals and reduced organ numbers in all four whorls as well as flatter and smaller meristems. Coordinated apical shift of gene expression patterns in the basal proembryo." evidence="2 3">
    <original>G</original>
    <variation>S</variation>
    <location>
        <position position="180"/>
    </location>
</feature>
<feature type="sequence conflict" description="In Ref. 4; AAM63797." evidence="9" ref="4">
    <original>G</original>
    <variation>D</variation>
    <location>
        <position position="138"/>
    </location>
</feature>
<feature type="sequence conflict" description="In Ref. 4; AAM63797." evidence="9" ref="4">
    <original>T</original>
    <variation>S</variation>
    <location>
        <position position="194"/>
    </location>
</feature>
<feature type="turn" evidence="12">
    <location>
        <begin position="155"/>
        <end position="157"/>
    </location>
</feature>
<feature type="strand" evidence="12">
    <location>
        <begin position="166"/>
        <end position="168"/>
    </location>
</feature>
<feature type="strand" evidence="12">
    <location>
        <begin position="171"/>
        <end position="175"/>
    </location>
</feature>
<feature type="helix" evidence="12">
    <location>
        <begin position="177"/>
        <end position="185"/>
    </location>
</feature>
<evidence type="ECO:0000255" key="1">
    <source>
        <dbReference type="PROSITE-ProRule" id="PRU00094"/>
    </source>
</evidence>
<evidence type="ECO:0000269" key="2">
    <source>
    </source>
</evidence>
<evidence type="ECO:0000269" key="3">
    <source>
    </source>
</evidence>
<evidence type="ECO:0000269" key="4">
    <source>
    </source>
</evidence>
<evidence type="ECO:0000269" key="5">
    <source>
    </source>
</evidence>
<evidence type="ECO:0000269" key="6">
    <source>
    </source>
</evidence>
<evidence type="ECO:0000303" key="7">
    <source>
    </source>
</evidence>
<evidence type="ECO:0000303" key="8">
    <source>
    </source>
</evidence>
<evidence type="ECO:0000305" key="9"/>
<evidence type="ECO:0000312" key="10">
    <source>
        <dbReference type="Araport" id="AT3G50870"/>
    </source>
</evidence>
<evidence type="ECO:0000312" key="11">
    <source>
        <dbReference type="EMBL" id="CAB42916.1"/>
    </source>
</evidence>
<evidence type="ECO:0007829" key="12">
    <source>
        <dbReference type="PDB" id="8J48"/>
    </source>
</evidence>
<organism>
    <name type="scientific">Arabidopsis thaliana</name>
    <name type="common">Mouse-ear cress</name>
    <dbReference type="NCBI Taxonomy" id="3702"/>
    <lineage>
        <taxon>Eukaryota</taxon>
        <taxon>Viridiplantae</taxon>
        <taxon>Streptophyta</taxon>
        <taxon>Embryophyta</taxon>
        <taxon>Tracheophyta</taxon>
        <taxon>Spermatophyta</taxon>
        <taxon>Magnoliopsida</taxon>
        <taxon>eudicotyledons</taxon>
        <taxon>Gunneridae</taxon>
        <taxon>Pentapetalae</taxon>
        <taxon>rosids</taxon>
        <taxon>malvids</taxon>
        <taxon>Brassicales</taxon>
        <taxon>Brassicaceae</taxon>
        <taxon>Camelineae</taxon>
        <taxon>Arabidopsis</taxon>
    </lineage>
</organism>
<proteinExistence type="evidence at protein level"/>